<gene>
    <name type="primary">SB62</name>
</gene>
<accession>O65082</accession>
<dbReference type="EMBL" id="AF051244">
    <property type="protein sequence ID" value="AAC32144.1"/>
    <property type="molecule type" value="mRNA"/>
</dbReference>
<dbReference type="EMBL" id="AF051757">
    <property type="protein sequence ID" value="AAC32174.1"/>
    <property type="molecule type" value="Genomic_DNA"/>
</dbReference>
<dbReference type="EMBL" id="AF051758">
    <property type="protein sequence ID" value="AAC32175.1"/>
    <property type="molecule type" value="Genomic_DNA"/>
</dbReference>
<dbReference type="EMBL" id="AF051759">
    <property type="protein sequence ID" value="AAC32176.1"/>
    <property type="molecule type" value="Genomic_DNA"/>
</dbReference>
<dbReference type="EMBL" id="AF051760">
    <property type="protein sequence ID" value="AAC32177.1"/>
    <property type="molecule type" value="Genomic_DNA"/>
</dbReference>
<dbReference type="SMR" id="O65082"/>
<dbReference type="GO" id="GO:0022625">
    <property type="term" value="C:cytosolic large ribosomal subunit"/>
    <property type="evidence" value="ECO:0007669"/>
    <property type="project" value="TreeGrafter"/>
</dbReference>
<dbReference type="GO" id="GO:0003723">
    <property type="term" value="F:RNA binding"/>
    <property type="evidence" value="ECO:0007669"/>
    <property type="project" value="TreeGrafter"/>
</dbReference>
<dbReference type="GO" id="GO:0003735">
    <property type="term" value="F:structural constituent of ribosome"/>
    <property type="evidence" value="ECO:0007669"/>
    <property type="project" value="InterPro"/>
</dbReference>
<dbReference type="GO" id="GO:0002181">
    <property type="term" value="P:cytoplasmic translation"/>
    <property type="evidence" value="ECO:0007669"/>
    <property type="project" value="TreeGrafter"/>
</dbReference>
<dbReference type="FunFam" id="3.40.1120.10:FF:000001">
    <property type="entry name" value="Ribosomal protein L15"/>
    <property type="match status" value="1"/>
</dbReference>
<dbReference type="Gene3D" id="3.40.1120.10">
    <property type="entry name" value="Ribosomal protein l15e"/>
    <property type="match status" value="1"/>
</dbReference>
<dbReference type="InterPro" id="IPR024794">
    <property type="entry name" value="Rbsml_eL15_core_dom_sf"/>
</dbReference>
<dbReference type="InterPro" id="IPR000439">
    <property type="entry name" value="Ribosomal_eL15"/>
</dbReference>
<dbReference type="InterPro" id="IPR020925">
    <property type="entry name" value="Ribosomal_eL15_CS"/>
</dbReference>
<dbReference type="InterPro" id="IPR012678">
    <property type="entry name" value="Ribosomal_uL23/eL15/eS24_sf"/>
</dbReference>
<dbReference type="NCBIfam" id="NF003269">
    <property type="entry name" value="PRK04243.1"/>
    <property type="match status" value="1"/>
</dbReference>
<dbReference type="PANTHER" id="PTHR11847:SF4">
    <property type="entry name" value="LARGE RIBOSOMAL SUBUNIT PROTEIN EL15"/>
    <property type="match status" value="1"/>
</dbReference>
<dbReference type="PANTHER" id="PTHR11847">
    <property type="entry name" value="RIBOSOMAL PROTEIN L15"/>
    <property type="match status" value="1"/>
</dbReference>
<dbReference type="Pfam" id="PF00827">
    <property type="entry name" value="Ribosomal_L15e"/>
    <property type="match status" value="1"/>
</dbReference>
<dbReference type="SMART" id="SM01384">
    <property type="entry name" value="Ribosomal_L15e"/>
    <property type="match status" value="1"/>
</dbReference>
<dbReference type="SUPFAM" id="SSF54189">
    <property type="entry name" value="Ribosomal proteins S24e, L23 and L15e"/>
    <property type="match status" value="1"/>
</dbReference>
<dbReference type="PROSITE" id="PS01194">
    <property type="entry name" value="RIBOSOMAL_L15E"/>
    <property type="match status" value="1"/>
</dbReference>
<evidence type="ECO:0000305" key="1"/>
<reference key="1">
    <citation type="journal article" date="1998" name="Genetics">
        <title>Sequence-tagged-site (STS) markers of arbitrary genes: development, characterization and analysis of linkage in black spruce.</title>
        <authorList>
            <person name="Perry D.J."/>
            <person name="Bousquet J."/>
        </authorList>
    </citation>
    <scope>NUCLEOTIDE SEQUENCE [GENOMIC DNA / MRNA]</scope>
</reference>
<comment type="similarity">
    <text evidence="1">Belongs to the eukaryotic ribosomal protein eL15 family.</text>
</comment>
<proteinExistence type="evidence at transcript level"/>
<organism>
    <name type="scientific">Picea mariana</name>
    <name type="common">Black spruce</name>
    <name type="synonym">Abies mariana</name>
    <dbReference type="NCBI Taxonomy" id="3335"/>
    <lineage>
        <taxon>Eukaryota</taxon>
        <taxon>Viridiplantae</taxon>
        <taxon>Streptophyta</taxon>
        <taxon>Embryophyta</taxon>
        <taxon>Tracheophyta</taxon>
        <taxon>Spermatophyta</taxon>
        <taxon>Pinopsida</taxon>
        <taxon>Pinidae</taxon>
        <taxon>Conifers I</taxon>
        <taxon>Pinales</taxon>
        <taxon>Pinaceae</taxon>
        <taxon>Picea</taxon>
    </lineage>
</organism>
<feature type="chain" id="PRO_0000127559" description="Large ribosomal subunit protein eL15y">
    <location>
        <begin position="1"/>
        <end position="204"/>
    </location>
</feature>
<sequence>MGAYKYIEELWKKKQSDVMRFLQRVRCWEYRQLPGIVRITHPTRPDKARRLGYKAKQGYVVYRVRVRRGGRKRPVPKGIVYGKPKNQGITQLKFQRSLRSVAEERAGRKLGGLRVLNSYWINQDSTYKYYEVVLVDQAHTVIRNDPRINWICNAVHKHRELRGLTSAGKKYRGLRGRGHLYHKARPSKRATWKRNNTLSLRRYR</sequence>
<name>RL15B_PICMA</name>
<protein>
    <recommendedName>
        <fullName evidence="1">Large ribosomal subunit protein eL15y</fullName>
    </recommendedName>
    <alternativeName>
        <fullName>60S ribosomal protein L15-2</fullName>
    </alternativeName>
</protein>
<keyword id="KW-0687">Ribonucleoprotein</keyword>
<keyword id="KW-0689">Ribosomal protein</keyword>